<feature type="chain" id="PRO_1000085444" description="Regulator of sigma D">
    <location>
        <begin position="1"/>
        <end position="158"/>
    </location>
</feature>
<keyword id="KW-0963">Cytoplasm</keyword>
<keyword id="KW-0804">Transcription</keyword>
<keyword id="KW-0805">Transcription regulation</keyword>
<evidence type="ECO:0000255" key="1">
    <source>
        <dbReference type="HAMAP-Rule" id="MF_01181"/>
    </source>
</evidence>
<name>RSD_ECOLC</name>
<gene>
    <name evidence="1" type="primary">rsd</name>
    <name type="ordered locus">EcolC_4030</name>
</gene>
<reference key="1">
    <citation type="submission" date="2008-02" db="EMBL/GenBank/DDBJ databases">
        <title>Complete sequence of Escherichia coli C str. ATCC 8739.</title>
        <authorList>
            <person name="Copeland A."/>
            <person name="Lucas S."/>
            <person name="Lapidus A."/>
            <person name="Glavina del Rio T."/>
            <person name="Dalin E."/>
            <person name="Tice H."/>
            <person name="Bruce D."/>
            <person name="Goodwin L."/>
            <person name="Pitluck S."/>
            <person name="Kiss H."/>
            <person name="Brettin T."/>
            <person name="Detter J.C."/>
            <person name="Han C."/>
            <person name="Kuske C.R."/>
            <person name="Schmutz J."/>
            <person name="Larimer F."/>
            <person name="Land M."/>
            <person name="Hauser L."/>
            <person name="Kyrpides N."/>
            <person name="Mikhailova N."/>
            <person name="Ingram L."/>
            <person name="Richardson P."/>
        </authorList>
    </citation>
    <scope>NUCLEOTIDE SEQUENCE [LARGE SCALE GENOMIC DNA]</scope>
    <source>
        <strain>ATCC 8739 / DSM 1576 / NBRC 3972 / NCIMB 8545 / WDCM 00012 / Crooks</strain>
    </source>
</reference>
<proteinExistence type="inferred from homology"/>
<accession>B1IUQ2</accession>
<comment type="function">
    <text evidence="1">Binds RpoD and negatively regulates RpoD-mediated transcription activation by preventing the interaction between the primary sigma factor RpoD with the catalytic core of the RNA polymerase and with promoter DNA. May be involved in replacement of the RNA polymerase sigma subunit from RpoD to RpoS during the transition from exponential growth to the stationary phase.</text>
</comment>
<comment type="subunit">
    <text evidence="1">Interacts with RpoD.</text>
</comment>
<comment type="subcellular location">
    <subcellularLocation>
        <location evidence="1">Cytoplasm</location>
    </subcellularLocation>
</comment>
<comment type="similarity">
    <text evidence="1">Belongs to the Rsd/AlgQ family.</text>
</comment>
<protein>
    <recommendedName>
        <fullName evidence="1">Regulator of sigma D</fullName>
    </recommendedName>
</protein>
<sequence>MLNQLDNLTERVRGSNKLVDRWLHVRKHLLVAYYNLVGIKPGKESYMRLNEKALDDFCQSLVDYLSAGHFSIYERILHKLEGNGQLARAAKIWPQLEANTQQIMDYYDSSLETAIDHDNYLEFQQVLSDIGEALEARFVLEDKLILLVLDAARVKHPA</sequence>
<dbReference type="EMBL" id="CP000946">
    <property type="protein sequence ID" value="ACA79629.1"/>
    <property type="molecule type" value="Genomic_DNA"/>
</dbReference>
<dbReference type="RefSeq" id="WP_000934302.1">
    <property type="nucleotide sequence ID" value="NZ_MTFT01000025.1"/>
</dbReference>
<dbReference type="SMR" id="B1IUQ2"/>
<dbReference type="GeneID" id="75205513"/>
<dbReference type="KEGG" id="ecl:EcolC_4030"/>
<dbReference type="HOGENOM" id="CLU_142729_0_0_6"/>
<dbReference type="GO" id="GO:0005737">
    <property type="term" value="C:cytoplasm"/>
    <property type="evidence" value="ECO:0007669"/>
    <property type="project" value="UniProtKB-SubCell"/>
</dbReference>
<dbReference type="GO" id="GO:0006355">
    <property type="term" value="P:regulation of DNA-templated transcription"/>
    <property type="evidence" value="ECO:0007669"/>
    <property type="project" value="InterPro"/>
</dbReference>
<dbReference type="FunFam" id="1.20.120.1370:FF:000001">
    <property type="entry name" value="Regulator of sigma D"/>
    <property type="match status" value="1"/>
</dbReference>
<dbReference type="Gene3D" id="1.20.120.1370">
    <property type="entry name" value="Regulator of RNA polymerase sigma(70) subunit, domain 4"/>
    <property type="match status" value="1"/>
</dbReference>
<dbReference type="HAMAP" id="MF_01181">
    <property type="entry name" value="Rsd"/>
    <property type="match status" value="1"/>
</dbReference>
<dbReference type="InterPro" id="IPR038309">
    <property type="entry name" value="Rsd/AlgQ_sf"/>
</dbReference>
<dbReference type="InterPro" id="IPR023785">
    <property type="entry name" value="Sigma70_reg_Rsd"/>
</dbReference>
<dbReference type="InterPro" id="IPR007448">
    <property type="entry name" value="Sigma70_reg_Rsd_AlgQ"/>
</dbReference>
<dbReference type="NCBIfam" id="NF008723">
    <property type="entry name" value="PRK11718.1"/>
    <property type="match status" value="1"/>
</dbReference>
<dbReference type="Pfam" id="PF04353">
    <property type="entry name" value="Rsd_AlgQ"/>
    <property type="match status" value="1"/>
</dbReference>
<dbReference type="PIRSF" id="PIRSF016548">
    <property type="entry name" value="Rsd_AlgQ"/>
    <property type="match status" value="1"/>
</dbReference>
<organism>
    <name type="scientific">Escherichia coli (strain ATCC 8739 / DSM 1576 / NBRC 3972 / NCIMB 8545 / WDCM 00012 / Crooks)</name>
    <dbReference type="NCBI Taxonomy" id="481805"/>
    <lineage>
        <taxon>Bacteria</taxon>
        <taxon>Pseudomonadati</taxon>
        <taxon>Pseudomonadota</taxon>
        <taxon>Gammaproteobacteria</taxon>
        <taxon>Enterobacterales</taxon>
        <taxon>Enterobacteriaceae</taxon>
        <taxon>Escherichia</taxon>
    </lineage>
</organism>